<dbReference type="EC" id="3.4.25.2" evidence="1"/>
<dbReference type="EMBL" id="CP000612">
    <property type="protein sequence ID" value="ABO50499.1"/>
    <property type="molecule type" value="Genomic_DNA"/>
</dbReference>
<dbReference type="RefSeq" id="WP_011878309.1">
    <property type="nucleotide sequence ID" value="NC_009253.1"/>
</dbReference>
<dbReference type="SMR" id="A4J5Z6"/>
<dbReference type="STRING" id="349161.Dred_1981"/>
<dbReference type="MEROPS" id="T01.007"/>
<dbReference type="KEGG" id="drm:Dred_1981"/>
<dbReference type="eggNOG" id="COG5405">
    <property type="taxonomic scope" value="Bacteria"/>
</dbReference>
<dbReference type="HOGENOM" id="CLU_093872_1_0_9"/>
<dbReference type="OrthoDB" id="9804884at2"/>
<dbReference type="Proteomes" id="UP000001556">
    <property type="component" value="Chromosome"/>
</dbReference>
<dbReference type="GO" id="GO:0009376">
    <property type="term" value="C:HslUV protease complex"/>
    <property type="evidence" value="ECO:0007669"/>
    <property type="project" value="UniProtKB-UniRule"/>
</dbReference>
<dbReference type="GO" id="GO:0005839">
    <property type="term" value="C:proteasome core complex"/>
    <property type="evidence" value="ECO:0007669"/>
    <property type="project" value="InterPro"/>
</dbReference>
<dbReference type="GO" id="GO:0046872">
    <property type="term" value="F:metal ion binding"/>
    <property type="evidence" value="ECO:0007669"/>
    <property type="project" value="UniProtKB-KW"/>
</dbReference>
<dbReference type="GO" id="GO:0004298">
    <property type="term" value="F:threonine-type endopeptidase activity"/>
    <property type="evidence" value="ECO:0007669"/>
    <property type="project" value="UniProtKB-KW"/>
</dbReference>
<dbReference type="GO" id="GO:0051603">
    <property type="term" value="P:proteolysis involved in protein catabolic process"/>
    <property type="evidence" value="ECO:0007669"/>
    <property type="project" value="InterPro"/>
</dbReference>
<dbReference type="CDD" id="cd01913">
    <property type="entry name" value="protease_HslV"/>
    <property type="match status" value="1"/>
</dbReference>
<dbReference type="Gene3D" id="3.60.20.10">
    <property type="entry name" value="Glutamine Phosphoribosylpyrophosphate, subunit 1, domain 1"/>
    <property type="match status" value="1"/>
</dbReference>
<dbReference type="HAMAP" id="MF_00248">
    <property type="entry name" value="HslV"/>
    <property type="match status" value="1"/>
</dbReference>
<dbReference type="InterPro" id="IPR022281">
    <property type="entry name" value="ATP-dep_Prtase_HsIV_su"/>
</dbReference>
<dbReference type="InterPro" id="IPR029055">
    <property type="entry name" value="Ntn_hydrolases_N"/>
</dbReference>
<dbReference type="InterPro" id="IPR001353">
    <property type="entry name" value="Proteasome_sua/b"/>
</dbReference>
<dbReference type="InterPro" id="IPR023333">
    <property type="entry name" value="Proteasome_suB-type"/>
</dbReference>
<dbReference type="NCBIfam" id="TIGR03692">
    <property type="entry name" value="ATP_dep_HslV"/>
    <property type="match status" value="1"/>
</dbReference>
<dbReference type="NCBIfam" id="NF003964">
    <property type="entry name" value="PRK05456.1"/>
    <property type="match status" value="1"/>
</dbReference>
<dbReference type="PANTHER" id="PTHR32194:SF0">
    <property type="entry name" value="ATP-DEPENDENT PROTEASE SUBUNIT HSLV"/>
    <property type="match status" value="1"/>
</dbReference>
<dbReference type="PANTHER" id="PTHR32194">
    <property type="entry name" value="METALLOPROTEASE TLDD"/>
    <property type="match status" value="1"/>
</dbReference>
<dbReference type="Pfam" id="PF00227">
    <property type="entry name" value="Proteasome"/>
    <property type="match status" value="1"/>
</dbReference>
<dbReference type="PIRSF" id="PIRSF039093">
    <property type="entry name" value="HslV"/>
    <property type="match status" value="1"/>
</dbReference>
<dbReference type="SUPFAM" id="SSF56235">
    <property type="entry name" value="N-terminal nucleophile aminohydrolases (Ntn hydrolases)"/>
    <property type="match status" value="1"/>
</dbReference>
<dbReference type="PROSITE" id="PS51476">
    <property type="entry name" value="PROTEASOME_BETA_2"/>
    <property type="match status" value="1"/>
</dbReference>
<protein>
    <recommendedName>
        <fullName evidence="1">ATP-dependent protease subunit HslV</fullName>
        <ecNumber evidence="1">3.4.25.2</ecNumber>
    </recommendedName>
</protein>
<keyword id="KW-0021">Allosteric enzyme</keyword>
<keyword id="KW-0963">Cytoplasm</keyword>
<keyword id="KW-0378">Hydrolase</keyword>
<keyword id="KW-0479">Metal-binding</keyword>
<keyword id="KW-0645">Protease</keyword>
<keyword id="KW-1185">Reference proteome</keyword>
<keyword id="KW-0915">Sodium</keyword>
<keyword id="KW-0888">Threonine protease</keyword>
<accession>A4J5Z6</accession>
<evidence type="ECO:0000255" key="1">
    <source>
        <dbReference type="HAMAP-Rule" id="MF_00248"/>
    </source>
</evidence>
<organism>
    <name type="scientific">Desulforamulus reducens (strain ATCC BAA-1160 / DSM 100696 / MI-1)</name>
    <name type="common">Desulfotomaculum reducens</name>
    <dbReference type="NCBI Taxonomy" id="349161"/>
    <lineage>
        <taxon>Bacteria</taxon>
        <taxon>Bacillati</taxon>
        <taxon>Bacillota</taxon>
        <taxon>Clostridia</taxon>
        <taxon>Eubacteriales</taxon>
        <taxon>Peptococcaceae</taxon>
        <taxon>Desulforamulus</taxon>
    </lineage>
</organism>
<proteinExistence type="inferred from homology"/>
<gene>
    <name evidence="1" type="primary">hslV</name>
    <name type="ordered locus">Dred_1981</name>
</gene>
<comment type="function">
    <text evidence="1">Protease subunit of a proteasome-like degradation complex believed to be a general protein degrading machinery.</text>
</comment>
<comment type="catalytic activity">
    <reaction evidence="1">
        <text>ATP-dependent cleavage of peptide bonds with broad specificity.</text>
        <dbReference type="EC" id="3.4.25.2"/>
    </reaction>
</comment>
<comment type="activity regulation">
    <text evidence="1">Allosterically activated by HslU binding.</text>
</comment>
<comment type="subunit">
    <text evidence="1">A double ring-shaped homohexamer of HslV is capped on each side by a ring-shaped HslU homohexamer. The assembly of the HslU/HslV complex is dependent on binding of ATP.</text>
</comment>
<comment type="subcellular location">
    <subcellularLocation>
        <location evidence="1">Cytoplasm</location>
    </subcellularLocation>
</comment>
<comment type="similarity">
    <text evidence="1">Belongs to the peptidase T1B family. HslV subfamily.</text>
</comment>
<name>HSLV_DESRM</name>
<reference key="1">
    <citation type="submission" date="2007-03" db="EMBL/GenBank/DDBJ databases">
        <title>Complete sequence of Desulfotomaculum reducens MI-1.</title>
        <authorList>
            <consortium name="US DOE Joint Genome Institute"/>
            <person name="Copeland A."/>
            <person name="Lucas S."/>
            <person name="Lapidus A."/>
            <person name="Barry K."/>
            <person name="Detter J.C."/>
            <person name="Glavina del Rio T."/>
            <person name="Hammon N."/>
            <person name="Israni S."/>
            <person name="Dalin E."/>
            <person name="Tice H."/>
            <person name="Pitluck S."/>
            <person name="Sims D."/>
            <person name="Brettin T."/>
            <person name="Bruce D."/>
            <person name="Han C."/>
            <person name="Tapia R."/>
            <person name="Schmutz J."/>
            <person name="Larimer F."/>
            <person name="Land M."/>
            <person name="Hauser L."/>
            <person name="Kyrpides N."/>
            <person name="Kim E."/>
            <person name="Tebo B.M."/>
            <person name="Richardson P."/>
        </authorList>
    </citation>
    <scope>NUCLEOTIDE SEQUENCE [LARGE SCALE GENOMIC DNA]</scope>
    <source>
        <strain>ATCC BAA-1160 / DSM 100696 / MI-1</strain>
    </source>
</reference>
<sequence>MFHATTIVAVKRGTKVAVAGDGQVTFGQNTIMKHTARKVRRLHNGQVLAGFAGSVADAFTLFEKFEGKLEEYHGNLMRAAVELAKAWRTDKYLRTLEAMLIVANQEHLLVLSGNGEVIEPDEGVTAIGSGGPYALAAARALTKHTNLSPKDITYEALNLAADICVYTNKNIVVEEI</sequence>
<feature type="chain" id="PRO_0000336772" description="ATP-dependent protease subunit HslV">
    <location>
        <begin position="1"/>
        <end position="176"/>
    </location>
</feature>
<feature type="active site" evidence="1">
    <location>
        <position position="5"/>
    </location>
</feature>
<feature type="binding site" evidence="1">
    <location>
        <position position="161"/>
    </location>
    <ligand>
        <name>Na(+)</name>
        <dbReference type="ChEBI" id="CHEBI:29101"/>
    </ligand>
</feature>
<feature type="binding site" evidence="1">
    <location>
        <position position="164"/>
    </location>
    <ligand>
        <name>Na(+)</name>
        <dbReference type="ChEBI" id="CHEBI:29101"/>
    </ligand>
</feature>
<feature type="binding site" evidence="1">
    <location>
        <position position="167"/>
    </location>
    <ligand>
        <name>Na(+)</name>
        <dbReference type="ChEBI" id="CHEBI:29101"/>
    </ligand>
</feature>